<accession>C0M6I4</accession>
<protein>
    <recommendedName>
        <fullName evidence="1">Holo-[acyl-carrier-protein] synthase</fullName>
        <shortName evidence="1">Holo-ACP synthase</shortName>
        <ecNumber evidence="1">2.7.8.7</ecNumber>
    </recommendedName>
    <alternativeName>
        <fullName evidence="1">4'-phosphopantetheinyl transferase AcpS</fullName>
    </alternativeName>
</protein>
<sequence>MIVGHGIDLQDISAIEKVYLRNARFARKVLTDKELALFEQFSHHRKMTYLAGRWAGKEAFSKAMGTGIGQLTFQDIEIINDSKGRPVITKSPFQGKAFISISHSGGYVQASVILEDLA</sequence>
<comment type="function">
    <text evidence="1">Transfers the 4'-phosphopantetheine moiety from coenzyme A to a Ser of acyl-carrier-protein.</text>
</comment>
<comment type="catalytic activity">
    <reaction evidence="1">
        <text>apo-[ACP] + CoA = holo-[ACP] + adenosine 3',5'-bisphosphate + H(+)</text>
        <dbReference type="Rhea" id="RHEA:12068"/>
        <dbReference type="Rhea" id="RHEA-COMP:9685"/>
        <dbReference type="Rhea" id="RHEA-COMP:9690"/>
        <dbReference type="ChEBI" id="CHEBI:15378"/>
        <dbReference type="ChEBI" id="CHEBI:29999"/>
        <dbReference type="ChEBI" id="CHEBI:57287"/>
        <dbReference type="ChEBI" id="CHEBI:58343"/>
        <dbReference type="ChEBI" id="CHEBI:64479"/>
        <dbReference type="EC" id="2.7.8.7"/>
    </reaction>
</comment>
<comment type="cofactor">
    <cofactor evidence="1">
        <name>Mg(2+)</name>
        <dbReference type="ChEBI" id="CHEBI:18420"/>
    </cofactor>
</comment>
<comment type="subcellular location">
    <subcellularLocation>
        <location evidence="1">Cytoplasm</location>
    </subcellularLocation>
</comment>
<comment type="similarity">
    <text evidence="1">Belongs to the P-Pant transferase superfamily. AcpS family.</text>
</comment>
<name>ACPS_STRE4</name>
<organism>
    <name type="scientific">Streptococcus equi subsp. equi (strain 4047)</name>
    <dbReference type="NCBI Taxonomy" id="553482"/>
    <lineage>
        <taxon>Bacteria</taxon>
        <taxon>Bacillati</taxon>
        <taxon>Bacillota</taxon>
        <taxon>Bacilli</taxon>
        <taxon>Lactobacillales</taxon>
        <taxon>Streptococcaceae</taxon>
        <taxon>Streptococcus</taxon>
    </lineage>
</organism>
<evidence type="ECO:0000255" key="1">
    <source>
        <dbReference type="HAMAP-Rule" id="MF_00101"/>
    </source>
</evidence>
<feature type="chain" id="PRO_1000118826" description="Holo-[acyl-carrier-protein] synthase">
    <location>
        <begin position="1"/>
        <end position="118"/>
    </location>
</feature>
<feature type="binding site" evidence="1">
    <location>
        <position position="8"/>
    </location>
    <ligand>
        <name>Mg(2+)</name>
        <dbReference type="ChEBI" id="CHEBI:18420"/>
    </ligand>
</feature>
<feature type="binding site" evidence="1">
    <location>
        <position position="58"/>
    </location>
    <ligand>
        <name>Mg(2+)</name>
        <dbReference type="ChEBI" id="CHEBI:18420"/>
    </ligand>
</feature>
<proteinExistence type="inferred from homology"/>
<reference key="1">
    <citation type="journal article" date="2009" name="PLoS Pathog.">
        <title>Genomic evidence for the evolution of Streptococcus equi: host restriction, increased virulence, and genetic exchange with human pathogens.</title>
        <authorList>
            <person name="Holden M.T.G."/>
            <person name="Heather Z."/>
            <person name="Paillot R."/>
            <person name="Steward K.F."/>
            <person name="Webb K."/>
            <person name="Ainslie F."/>
            <person name="Jourdan T."/>
            <person name="Bason N.C."/>
            <person name="Holroyd N.E."/>
            <person name="Mungall K."/>
            <person name="Quail M.A."/>
            <person name="Sanders M."/>
            <person name="Simmonds M."/>
            <person name="Willey D."/>
            <person name="Brooks K."/>
            <person name="Aanensen D.M."/>
            <person name="Spratt B.G."/>
            <person name="Jolley K.A."/>
            <person name="Maiden M.C.J."/>
            <person name="Kehoe M."/>
            <person name="Chanter N."/>
            <person name="Bentley S.D."/>
            <person name="Robinson C."/>
            <person name="Maskell D.J."/>
            <person name="Parkhill J."/>
            <person name="Waller A.S."/>
        </authorList>
    </citation>
    <scope>NUCLEOTIDE SEQUENCE [LARGE SCALE GENOMIC DNA]</scope>
    <source>
        <strain>4047</strain>
    </source>
</reference>
<dbReference type="EC" id="2.7.8.7" evidence="1"/>
<dbReference type="EMBL" id="FM204883">
    <property type="protein sequence ID" value="CAW92609.1"/>
    <property type="molecule type" value="Genomic_DNA"/>
</dbReference>
<dbReference type="RefSeq" id="WP_012678485.1">
    <property type="nucleotide sequence ID" value="NC_012471.1"/>
</dbReference>
<dbReference type="SMR" id="C0M6I4"/>
<dbReference type="KEGG" id="seu:SEQ_0436"/>
<dbReference type="HOGENOM" id="CLU_089696_1_2_9"/>
<dbReference type="OrthoDB" id="517356at2"/>
<dbReference type="Proteomes" id="UP000001365">
    <property type="component" value="Chromosome"/>
</dbReference>
<dbReference type="GO" id="GO:0005737">
    <property type="term" value="C:cytoplasm"/>
    <property type="evidence" value="ECO:0007669"/>
    <property type="project" value="UniProtKB-SubCell"/>
</dbReference>
<dbReference type="GO" id="GO:0008897">
    <property type="term" value="F:holo-[acyl-carrier-protein] synthase activity"/>
    <property type="evidence" value="ECO:0007669"/>
    <property type="project" value="UniProtKB-UniRule"/>
</dbReference>
<dbReference type="GO" id="GO:0000287">
    <property type="term" value="F:magnesium ion binding"/>
    <property type="evidence" value="ECO:0007669"/>
    <property type="project" value="UniProtKB-UniRule"/>
</dbReference>
<dbReference type="GO" id="GO:0006633">
    <property type="term" value="P:fatty acid biosynthetic process"/>
    <property type="evidence" value="ECO:0007669"/>
    <property type="project" value="UniProtKB-UniRule"/>
</dbReference>
<dbReference type="Gene3D" id="3.90.470.20">
    <property type="entry name" value="4'-phosphopantetheinyl transferase domain"/>
    <property type="match status" value="1"/>
</dbReference>
<dbReference type="HAMAP" id="MF_00101">
    <property type="entry name" value="AcpS"/>
    <property type="match status" value="1"/>
</dbReference>
<dbReference type="InterPro" id="IPR008278">
    <property type="entry name" value="4-PPantetheinyl_Trfase_dom"/>
</dbReference>
<dbReference type="InterPro" id="IPR037143">
    <property type="entry name" value="4-PPantetheinyl_Trfase_dom_sf"/>
</dbReference>
<dbReference type="InterPro" id="IPR002582">
    <property type="entry name" value="ACPS"/>
</dbReference>
<dbReference type="InterPro" id="IPR004568">
    <property type="entry name" value="Ppantetheine-prot_Trfase_dom"/>
</dbReference>
<dbReference type="NCBIfam" id="TIGR00516">
    <property type="entry name" value="acpS"/>
    <property type="match status" value="1"/>
</dbReference>
<dbReference type="NCBIfam" id="TIGR00556">
    <property type="entry name" value="pantethn_trn"/>
    <property type="match status" value="1"/>
</dbReference>
<dbReference type="Pfam" id="PF01648">
    <property type="entry name" value="ACPS"/>
    <property type="match status" value="1"/>
</dbReference>
<dbReference type="SUPFAM" id="SSF56214">
    <property type="entry name" value="4'-phosphopantetheinyl transferase"/>
    <property type="match status" value="1"/>
</dbReference>
<keyword id="KW-0963">Cytoplasm</keyword>
<keyword id="KW-0275">Fatty acid biosynthesis</keyword>
<keyword id="KW-0276">Fatty acid metabolism</keyword>
<keyword id="KW-0444">Lipid biosynthesis</keyword>
<keyword id="KW-0443">Lipid metabolism</keyword>
<keyword id="KW-0460">Magnesium</keyword>
<keyword id="KW-0479">Metal-binding</keyword>
<keyword id="KW-0808">Transferase</keyword>
<gene>
    <name evidence="1" type="primary">acpS</name>
    <name type="ordered locus">SEQ_0436</name>
</gene>